<protein>
    <recommendedName>
        <fullName evidence="12">ABC multidrug transporter mdr1</fullName>
    </recommendedName>
</protein>
<reference key="1">
    <citation type="journal article" date="2005" name="Nature">
        <title>Genomic sequence of the pathogenic and allergenic filamentous fungus Aspergillus fumigatus.</title>
        <authorList>
            <person name="Nierman W.C."/>
            <person name="Pain A."/>
            <person name="Anderson M.J."/>
            <person name="Wortman J.R."/>
            <person name="Kim H.S."/>
            <person name="Arroyo J."/>
            <person name="Berriman M."/>
            <person name="Abe K."/>
            <person name="Archer D.B."/>
            <person name="Bermejo C."/>
            <person name="Bennett J.W."/>
            <person name="Bowyer P."/>
            <person name="Chen D."/>
            <person name="Collins M."/>
            <person name="Coulsen R."/>
            <person name="Davies R."/>
            <person name="Dyer P.S."/>
            <person name="Farman M.L."/>
            <person name="Fedorova N."/>
            <person name="Fedorova N.D."/>
            <person name="Feldblyum T.V."/>
            <person name="Fischer R."/>
            <person name="Fosker N."/>
            <person name="Fraser A."/>
            <person name="Garcia J.L."/>
            <person name="Garcia M.J."/>
            <person name="Goble A."/>
            <person name="Goldman G.H."/>
            <person name="Gomi K."/>
            <person name="Griffith-Jones S."/>
            <person name="Gwilliam R."/>
            <person name="Haas B.J."/>
            <person name="Haas H."/>
            <person name="Harris D.E."/>
            <person name="Horiuchi H."/>
            <person name="Huang J."/>
            <person name="Humphray S."/>
            <person name="Jimenez J."/>
            <person name="Keller N."/>
            <person name="Khouri H."/>
            <person name="Kitamoto K."/>
            <person name="Kobayashi T."/>
            <person name="Konzack S."/>
            <person name="Kulkarni R."/>
            <person name="Kumagai T."/>
            <person name="Lafton A."/>
            <person name="Latge J.-P."/>
            <person name="Li W."/>
            <person name="Lord A."/>
            <person name="Lu C."/>
            <person name="Majoros W.H."/>
            <person name="May G.S."/>
            <person name="Miller B.L."/>
            <person name="Mohamoud Y."/>
            <person name="Molina M."/>
            <person name="Monod M."/>
            <person name="Mouyna I."/>
            <person name="Mulligan S."/>
            <person name="Murphy L.D."/>
            <person name="O'Neil S."/>
            <person name="Paulsen I."/>
            <person name="Penalva M.A."/>
            <person name="Pertea M."/>
            <person name="Price C."/>
            <person name="Pritchard B.L."/>
            <person name="Quail M.A."/>
            <person name="Rabbinowitsch E."/>
            <person name="Rawlins N."/>
            <person name="Rajandream M.A."/>
            <person name="Reichard U."/>
            <person name="Renauld H."/>
            <person name="Robson G.D."/>
            <person name="Rodriguez de Cordoba S."/>
            <person name="Rodriguez-Pena J.M."/>
            <person name="Ronning C.M."/>
            <person name="Rutter S."/>
            <person name="Salzberg S.L."/>
            <person name="Sanchez M."/>
            <person name="Sanchez-Ferrero J.C."/>
            <person name="Saunders D."/>
            <person name="Seeger K."/>
            <person name="Squares R."/>
            <person name="Squares S."/>
            <person name="Takeuchi M."/>
            <person name="Tekaia F."/>
            <person name="Turner G."/>
            <person name="Vazquez de Aldana C.R."/>
            <person name="Weidman J."/>
            <person name="White O."/>
            <person name="Woodward J.R."/>
            <person name="Yu J.-H."/>
            <person name="Fraser C.M."/>
            <person name="Galagan J.E."/>
            <person name="Asai K."/>
            <person name="Machida M."/>
            <person name="Hall N."/>
            <person name="Barrell B.G."/>
            <person name="Denning D.W."/>
        </authorList>
    </citation>
    <scope>NUCLEOTIDE SEQUENCE [LARGE SCALE GENOMIC DNA]</scope>
    <source>
        <strain>ATCC MYA-4609 / CBS 101355 / FGSC A1100 / Af293</strain>
    </source>
</reference>
<reference key="2">
    <citation type="journal article" date="1997" name="Gene">
        <title>Genes encoding multiple drug resistance-like proteins in Aspergillus fumigatus and Aspergillus flavus.</title>
        <authorList>
            <person name="Tobin M.B."/>
            <person name="Peery R.B."/>
            <person name="Skatrud P.L."/>
        </authorList>
    </citation>
    <scope>IDENTIFICATION</scope>
    <scope>FUNCTION</scope>
</reference>
<reference key="3">
    <citation type="journal article" date="2004" name="Antimicrob. Agents Chemother.">
        <title>In vitro evolution of itraconazole resistance in Aspergillus fumigatus involves multiple mechanisms of resistance.</title>
        <authorList>
            <person name="da Silva Ferreira M.E."/>
            <person name="Capellaro J.L."/>
            <person name="dos Reis Marques E."/>
            <person name="Malavazi I."/>
            <person name="Perlin D."/>
            <person name="Park S."/>
            <person name="Anderson J.B."/>
            <person name="Colombo A.L."/>
            <person name="Arthington-Skaggs B.A."/>
            <person name="Goldman M.H."/>
            <person name="Goldman G.H."/>
        </authorList>
    </citation>
    <scope>INDUCTION</scope>
</reference>
<reference key="4">
    <citation type="journal article" date="2006" name="Curr. Genet.">
        <title>Transcriptome analysis of Aspergillus fumigatus exposed to voriconazole.</title>
        <authorList>
            <person name="da Silva Ferreira M.E."/>
            <person name="Malavazi I."/>
            <person name="Savoldi M."/>
            <person name="Brakhage A.A."/>
            <person name="Goldman M.H."/>
            <person name="Kim H.S."/>
            <person name="Nierman W.C."/>
            <person name="Goldman G.H."/>
        </authorList>
    </citation>
    <scope>INDUCTION</scope>
</reference>
<reference key="5">
    <citation type="journal article" date="2008" name="Mol. Microbiol.">
        <title>SreA-mediated iron regulation in Aspergillus fumigatus.</title>
        <authorList>
            <person name="Schrettl M."/>
            <person name="Kim H.S."/>
            <person name="Eisendle M."/>
            <person name="Kragl C."/>
            <person name="Nierman W.C."/>
            <person name="Heinekamp T."/>
            <person name="Werner E.R."/>
            <person name="Jacobsen I."/>
            <person name="Illmer P."/>
            <person name="Yi H."/>
            <person name="Brakhage A.A."/>
            <person name="Haas H."/>
        </authorList>
    </citation>
    <scope>INDUCTION</scope>
</reference>
<reference key="6">
    <citation type="journal article" date="2012" name="Eukaryot. Cell">
        <title>Global transcriptome changes underlying colony growth in the opportunistic human pathogen Aspergillus fumigatus.</title>
        <authorList>
            <person name="Gibbons J.G."/>
            <person name="Beauvais A."/>
            <person name="Beau R."/>
            <person name="McGary K.L."/>
            <person name="Latge J.P."/>
            <person name="Rokas A."/>
        </authorList>
    </citation>
    <scope>INDUCTION</scope>
</reference>
<feature type="chain" id="PRO_0000445102" description="ABC multidrug transporter mdr1">
    <location>
        <begin position="1"/>
        <end position="1349"/>
    </location>
</feature>
<feature type="transmembrane region" description="Helical" evidence="1 3">
    <location>
        <begin position="108"/>
        <end position="128"/>
    </location>
</feature>
<feature type="transmembrane region" description="Helical" evidence="1 3">
    <location>
        <begin position="162"/>
        <end position="182"/>
    </location>
</feature>
<feature type="transmembrane region" description="Helical" evidence="1 3">
    <location>
        <begin position="234"/>
        <end position="254"/>
    </location>
</feature>
<feature type="transmembrane region" description="Helical" evidence="1 3">
    <location>
        <begin position="257"/>
        <end position="277"/>
    </location>
</feature>
<feature type="transmembrane region" description="Helical" evidence="1 3">
    <location>
        <begin position="339"/>
        <end position="359"/>
    </location>
</feature>
<feature type="transmembrane region" description="Helical" evidence="1 3">
    <location>
        <begin position="371"/>
        <end position="391"/>
    </location>
</feature>
<feature type="transmembrane region" description="Helical" evidence="1 3">
    <location>
        <begin position="779"/>
        <end position="799"/>
    </location>
</feature>
<feature type="transmembrane region" description="Helical" evidence="1 3">
    <location>
        <begin position="828"/>
        <end position="848"/>
    </location>
</feature>
<feature type="transmembrane region" description="Helical" evidence="1 3">
    <location>
        <begin position="896"/>
        <end position="916"/>
    </location>
</feature>
<feature type="transmembrane region" description="Helical" evidence="1 3">
    <location>
        <begin position="926"/>
        <end position="948"/>
    </location>
</feature>
<feature type="transmembrane region" description="Helical" evidence="1 3">
    <location>
        <begin position="1016"/>
        <end position="1036"/>
    </location>
</feature>
<feature type="transmembrane region" description="Helical" evidence="1 3">
    <location>
        <begin position="1043"/>
        <end position="1063"/>
    </location>
</feature>
<feature type="domain" description="ABC transmembrane type-1 1" evidence="3">
    <location>
        <begin position="112"/>
        <end position="402"/>
    </location>
</feature>
<feature type="domain" description="ABC transporter 1" evidence="2">
    <location>
        <begin position="437"/>
        <end position="682"/>
    </location>
</feature>
<feature type="domain" description="ABC transmembrane type-1 2" evidence="3">
    <location>
        <begin position="780"/>
        <end position="1069"/>
    </location>
</feature>
<feature type="domain" description="ABC transporter 2" evidence="2">
    <location>
        <begin position="1104"/>
        <end position="1342"/>
    </location>
</feature>
<feature type="region of interest" description="Disordered" evidence="5">
    <location>
        <begin position="1"/>
        <end position="62"/>
    </location>
</feature>
<feature type="compositionally biased region" description="Basic and acidic residues" evidence="5">
    <location>
        <begin position="35"/>
        <end position="45"/>
    </location>
</feature>
<feature type="binding site" evidence="2">
    <location>
        <begin position="472"/>
        <end position="479"/>
    </location>
    <ligand>
        <name>ATP</name>
        <dbReference type="ChEBI" id="CHEBI:30616"/>
    </ligand>
</feature>
<feature type="binding site" evidence="2">
    <location>
        <begin position="1139"/>
        <end position="1146"/>
    </location>
    <ligand>
        <name>ATP</name>
        <dbReference type="ChEBI" id="CHEBI:30616"/>
    </ligand>
</feature>
<feature type="glycosylation site" description="N-linked (GlcNAc...) asparagine" evidence="4">
    <location>
        <position position="308"/>
    </location>
</feature>
<feature type="glycosylation site" description="N-linked (GlcNAc...) asparagine" evidence="4">
    <location>
        <position position="878"/>
    </location>
</feature>
<feature type="glycosylation site" description="N-linked (GlcNAc...) asparagine" evidence="4">
    <location>
        <position position="893"/>
    </location>
</feature>
<feature type="glycosylation site" description="N-linked (GlcNAc...) asparagine" evidence="4">
    <location>
        <position position="1126"/>
    </location>
</feature>
<gene>
    <name evidence="12" type="primary">mdr1</name>
    <name evidence="11" type="synonym">abcA</name>
    <name type="ORF">AFUA_5G06070</name>
</gene>
<proteinExistence type="evidence at transcript level"/>
<name>MDR1_ASPFU</name>
<keyword id="KW-0067">ATP-binding</keyword>
<keyword id="KW-1003">Cell membrane</keyword>
<keyword id="KW-0325">Glycoprotein</keyword>
<keyword id="KW-0472">Membrane</keyword>
<keyword id="KW-0547">Nucleotide-binding</keyword>
<keyword id="KW-1185">Reference proteome</keyword>
<keyword id="KW-0677">Repeat</keyword>
<keyword id="KW-0812">Transmembrane</keyword>
<keyword id="KW-1133">Transmembrane helix</keyword>
<keyword id="KW-0813">Transport</keyword>
<comment type="function">
    <text evidence="10 14">Pleiotropic ABC efflux transporter that may be involved in A.fumigatus adaptation to azoles such as vorizonazole.</text>
</comment>
<comment type="catalytic activity">
    <reaction evidence="14">
        <text>voriconazole(in) + ATP + H2O = voriconazole(out) + ADP + phosphate + H(+)</text>
        <dbReference type="Rhea" id="RHEA:61912"/>
        <dbReference type="ChEBI" id="CHEBI:10023"/>
        <dbReference type="ChEBI" id="CHEBI:15377"/>
        <dbReference type="ChEBI" id="CHEBI:15378"/>
        <dbReference type="ChEBI" id="CHEBI:30616"/>
        <dbReference type="ChEBI" id="CHEBI:43474"/>
        <dbReference type="ChEBI" id="CHEBI:456216"/>
    </reaction>
    <physiologicalReaction direction="left-to-right" evidence="14">
        <dbReference type="Rhea" id="RHEA:61913"/>
    </physiologicalReaction>
</comment>
<comment type="subcellular location">
    <subcellularLocation>
        <location evidence="13">Cell membrane</location>
        <topology evidence="1">Multi-pass membrane protein</topology>
    </subcellularLocation>
</comment>
<comment type="induction">
    <text evidence="6 7 8 9">Expression is induced upon voriconazole treatment (PubMed:16622700). Expression is up-regulated in sreA deficiency strains, probably in response to accumulation of toxic compounds (PubMed:18721228). Expression is up-regulated during biofilm growth (PubMed:21724936). Expression is increased in clinical azole-resistant isolates (PubMed:15504870).</text>
</comment>
<comment type="similarity">
    <text evidence="13">Belongs to the ABC transporter superfamily. ABCB family. Multidrug resistance exporter (TC 3.A.1.201) subfamily.</text>
</comment>
<sequence length="1349" mass="147784">MPAPETGASSREKSLEDLQVATLEKGRSTSSFGADNEKPHDHHSLSDTIMAPPDGKQKDHGKAVDLNDDSLFAHLQEHEKEVLKRQLDAPSVKVSFFTLYRYASRKDILIILVSAICAIAAGAALPLFTILFGSLASAFQGISLGTMPYHEFYHKLTKNVLYFVYLGIAEFVTVYVSTVGFIYTGEHLTQKIRENYLEAILRQNMAYFDKLGAGEVTTRITADTNLIQDAISEKVGLTLTAFATFVTAFIVAYVKYWKLALICTSTIVALVMVMGGGSRFIVKYSKKSIESYGAGGTVAEEVISSIRNATAFGTQDKLAKQYETHLAEAEKWGVKQQVILGMMIGGMFGIMFSNYGLGFWMGSRFVVGKEVNVGQVLTVLMSILIGSFSLGNVAPNGQAFTNGVAAAAKIYSTIDRRSPLDPYSDEGKVLDHFEGNIEFRNVKHIYPSRPEVTVMEDVSLSMPAGKTTALVGPSGSGKSTVVGLVERFYLPVGGQVLLDGHDIQTLNLRWLRQQISLVSQEPVLFSTTIFRNIEHGLIGTKFEHESKDKIRELVENAARMANAHDFIMALPEGYDTNVGQRGFLLSGGQKQRIAIARAIVSDPKILLLDEATSALDTKSEGVVQAALDKAAEGRTTIVIAHRLSTIKTAHNIVAMVGGKIAEQGTHDELVDRKGTYYKLVEAQRINEEKEAEALEADADMDADDFGQEGVTRIKTAVSSSNSLDAVDEKARLEMKRTGTQKSVSSAVLSKKVPEQFEKYSLWTLVKFIGAFNRPELGYMLIGLTFSFLAGGGQPTQAFLYAKAISTLSLPESMFHKLRHDANFWSLMFFVVGIAQFISLSINGTAFAICSERLIRRARSQAFRSILRQDISFFDREENSTGALTSFLSTETKNLSGVSGVTLGTIIMTSTTLGAAMIIALAIGWKLALVCISVVPILLACGFLRFYMLAQFQQRSKSAYEGSASYACEATSAIRTVASLTREQDVWGVYHDQLQKQGRKSLISVLRSSLLYASSQALVFFCVALGFWYGGTLLGHHEYSIFRFFVCFSEILFGAQSAGTVFSFAPDMGKAKNAAAQFKKLFDSKPTIDIWSDEGEKLESMEGEIEFRDVHFRYPTRPEQPVLRGLNLSVKPGQYIALVGPSGCGKSTTIALLERFYDALAGGVFVDGKDITKLNVNSYRSFLSLVSQEPTLYQGTIKENILLGVDKDDVSEETLIKVCKDANIYDFVMSLPEGFDTVVGSKGGMLSGGQKQRVAIARALLRDPKVLLLDEATSALDSESEKVVQAALDAAARGRTTIAVAHRLSTIQNADIIYVFDQGKIVESGTHHELIRNKGRYYELVNLQSLGKTH</sequence>
<evidence type="ECO:0000255" key="1"/>
<evidence type="ECO:0000255" key="2">
    <source>
        <dbReference type="PROSITE-ProRule" id="PRU00434"/>
    </source>
</evidence>
<evidence type="ECO:0000255" key="3">
    <source>
        <dbReference type="PROSITE-ProRule" id="PRU00441"/>
    </source>
</evidence>
<evidence type="ECO:0000255" key="4">
    <source>
        <dbReference type="PROSITE-ProRule" id="PRU00498"/>
    </source>
</evidence>
<evidence type="ECO:0000256" key="5">
    <source>
        <dbReference type="SAM" id="MobiDB-lite"/>
    </source>
</evidence>
<evidence type="ECO:0000269" key="6">
    <source>
    </source>
</evidence>
<evidence type="ECO:0000269" key="7">
    <source>
    </source>
</evidence>
<evidence type="ECO:0000269" key="8">
    <source>
    </source>
</evidence>
<evidence type="ECO:0000269" key="9">
    <source>
    </source>
</evidence>
<evidence type="ECO:0000269" key="10">
    <source>
    </source>
</evidence>
<evidence type="ECO:0000303" key="11">
    <source>
    </source>
</evidence>
<evidence type="ECO:0000303" key="12">
    <source>
    </source>
</evidence>
<evidence type="ECO:0000305" key="13"/>
<evidence type="ECO:0000305" key="14">
    <source>
    </source>
</evidence>
<organism>
    <name type="scientific">Aspergillus fumigatus (strain ATCC MYA-4609 / CBS 101355 / FGSC A1100 / Af293)</name>
    <name type="common">Neosartorya fumigata</name>
    <dbReference type="NCBI Taxonomy" id="330879"/>
    <lineage>
        <taxon>Eukaryota</taxon>
        <taxon>Fungi</taxon>
        <taxon>Dikarya</taxon>
        <taxon>Ascomycota</taxon>
        <taxon>Pezizomycotina</taxon>
        <taxon>Eurotiomycetes</taxon>
        <taxon>Eurotiomycetidae</taxon>
        <taxon>Eurotiales</taxon>
        <taxon>Aspergillaceae</taxon>
        <taxon>Aspergillus</taxon>
        <taxon>Aspergillus subgen. Fumigati</taxon>
    </lineage>
</organism>
<accession>Q4WTT9</accession>
<dbReference type="EMBL" id="AAHF01000003">
    <property type="protein sequence ID" value="EAL91987.1"/>
    <property type="molecule type" value="Genomic_DNA"/>
</dbReference>
<dbReference type="RefSeq" id="XP_754025.1">
    <property type="nucleotide sequence ID" value="XM_748932.1"/>
</dbReference>
<dbReference type="SMR" id="Q4WTT9"/>
<dbReference type="STRING" id="330879.Q4WTT9"/>
<dbReference type="GlyCosmos" id="Q4WTT9">
    <property type="glycosylation" value="4 sites, No reported glycans"/>
</dbReference>
<dbReference type="EnsemblFungi" id="EAL91987">
    <property type="protein sequence ID" value="EAL91987"/>
    <property type="gene ID" value="AFUA_5G06070"/>
</dbReference>
<dbReference type="GeneID" id="3511130"/>
<dbReference type="KEGG" id="afm:AFUA_5G06070"/>
<dbReference type="VEuPathDB" id="FungiDB:Afu5g06070"/>
<dbReference type="eggNOG" id="KOG0055">
    <property type="taxonomic scope" value="Eukaryota"/>
</dbReference>
<dbReference type="HOGENOM" id="CLU_000604_17_2_1"/>
<dbReference type="InParanoid" id="Q4WTT9"/>
<dbReference type="OMA" id="IGMAAPY"/>
<dbReference type="OrthoDB" id="6500128at2759"/>
<dbReference type="Proteomes" id="UP000002530">
    <property type="component" value="Chromosome 5"/>
</dbReference>
<dbReference type="GO" id="GO:0016020">
    <property type="term" value="C:membrane"/>
    <property type="evidence" value="ECO:0000318"/>
    <property type="project" value="GO_Central"/>
</dbReference>
<dbReference type="GO" id="GO:0005886">
    <property type="term" value="C:plasma membrane"/>
    <property type="evidence" value="ECO:0007669"/>
    <property type="project" value="UniProtKB-SubCell"/>
</dbReference>
<dbReference type="GO" id="GO:0140359">
    <property type="term" value="F:ABC-type transporter activity"/>
    <property type="evidence" value="ECO:0007669"/>
    <property type="project" value="InterPro"/>
</dbReference>
<dbReference type="GO" id="GO:0005524">
    <property type="term" value="F:ATP binding"/>
    <property type="evidence" value="ECO:0007669"/>
    <property type="project" value="UniProtKB-KW"/>
</dbReference>
<dbReference type="GO" id="GO:0016887">
    <property type="term" value="F:ATP hydrolysis activity"/>
    <property type="evidence" value="ECO:0007669"/>
    <property type="project" value="InterPro"/>
</dbReference>
<dbReference type="GO" id="GO:0042626">
    <property type="term" value="F:ATPase-coupled transmembrane transporter activity"/>
    <property type="evidence" value="ECO:0000318"/>
    <property type="project" value="GO_Central"/>
</dbReference>
<dbReference type="GO" id="GO:0055085">
    <property type="term" value="P:transmembrane transport"/>
    <property type="evidence" value="ECO:0000318"/>
    <property type="project" value="GO_Central"/>
</dbReference>
<dbReference type="CDD" id="cd18577">
    <property type="entry name" value="ABC_6TM_Pgp_ABCB1_D1_like"/>
    <property type="match status" value="1"/>
</dbReference>
<dbReference type="CDD" id="cd18578">
    <property type="entry name" value="ABC_6TM_Pgp_ABCB1_D2_like"/>
    <property type="match status" value="1"/>
</dbReference>
<dbReference type="CDD" id="cd03249">
    <property type="entry name" value="ABC_MTABC3_MDL1_MDL2"/>
    <property type="match status" value="2"/>
</dbReference>
<dbReference type="FunFam" id="1.20.1560.10:FF:000102">
    <property type="entry name" value="ABC multidrug transporter Mdr1"/>
    <property type="match status" value="1"/>
</dbReference>
<dbReference type="FunFam" id="1.20.1560.10:FF:000009">
    <property type="entry name" value="ABC transporter B family member 1"/>
    <property type="match status" value="1"/>
</dbReference>
<dbReference type="FunFam" id="3.40.50.300:FF:000251">
    <property type="entry name" value="ABC transporter B family member 19"/>
    <property type="match status" value="1"/>
</dbReference>
<dbReference type="FunFam" id="3.40.50.300:FF:000302">
    <property type="entry name" value="ATP-binding cassette subfamily B member 5"/>
    <property type="match status" value="1"/>
</dbReference>
<dbReference type="Gene3D" id="1.20.1560.10">
    <property type="entry name" value="ABC transporter type 1, transmembrane domain"/>
    <property type="match status" value="1"/>
</dbReference>
<dbReference type="Gene3D" id="3.40.50.300">
    <property type="entry name" value="P-loop containing nucleotide triphosphate hydrolases"/>
    <property type="match status" value="2"/>
</dbReference>
<dbReference type="InterPro" id="IPR003593">
    <property type="entry name" value="AAA+_ATPase"/>
</dbReference>
<dbReference type="InterPro" id="IPR011527">
    <property type="entry name" value="ABC1_TM_dom"/>
</dbReference>
<dbReference type="InterPro" id="IPR036640">
    <property type="entry name" value="ABC1_TM_sf"/>
</dbReference>
<dbReference type="InterPro" id="IPR003439">
    <property type="entry name" value="ABC_transporter-like_ATP-bd"/>
</dbReference>
<dbReference type="InterPro" id="IPR017871">
    <property type="entry name" value="ABC_transporter-like_CS"/>
</dbReference>
<dbReference type="InterPro" id="IPR027417">
    <property type="entry name" value="P-loop_NTPase"/>
</dbReference>
<dbReference type="InterPro" id="IPR039421">
    <property type="entry name" value="Type_1_exporter"/>
</dbReference>
<dbReference type="PANTHER" id="PTHR43394">
    <property type="entry name" value="ATP-DEPENDENT PERMEASE MDL1, MITOCHONDRIAL"/>
    <property type="match status" value="1"/>
</dbReference>
<dbReference type="PANTHER" id="PTHR43394:SF27">
    <property type="entry name" value="ATP-DEPENDENT TRANSLOCASE ABCB1-LIKE"/>
    <property type="match status" value="1"/>
</dbReference>
<dbReference type="Pfam" id="PF00664">
    <property type="entry name" value="ABC_membrane"/>
    <property type="match status" value="2"/>
</dbReference>
<dbReference type="Pfam" id="PF00005">
    <property type="entry name" value="ABC_tran"/>
    <property type="match status" value="2"/>
</dbReference>
<dbReference type="SMART" id="SM00382">
    <property type="entry name" value="AAA"/>
    <property type="match status" value="2"/>
</dbReference>
<dbReference type="SUPFAM" id="SSF90123">
    <property type="entry name" value="ABC transporter transmembrane region"/>
    <property type="match status" value="2"/>
</dbReference>
<dbReference type="SUPFAM" id="SSF52540">
    <property type="entry name" value="P-loop containing nucleoside triphosphate hydrolases"/>
    <property type="match status" value="2"/>
</dbReference>
<dbReference type="PROSITE" id="PS50929">
    <property type="entry name" value="ABC_TM1F"/>
    <property type="match status" value="2"/>
</dbReference>
<dbReference type="PROSITE" id="PS00211">
    <property type="entry name" value="ABC_TRANSPORTER_1"/>
    <property type="match status" value="2"/>
</dbReference>
<dbReference type="PROSITE" id="PS50893">
    <property type="entry name" value="ABC_TRANSPORTER_2"/>
    <property type="match status" value="2"/>
</dbReference>